<reference key="1">
    <citation type="journal article" date="2006" name="Proc. Natl. Acad. Sci. U.S.A.">
        <title>Genome reduction in Leptospira borgpetersenii reflects limited transmission potential.</title>
        <authorList>
            <person name="Bulach D.M."/>
            <person name="Zuerner R.L."/>
            <person name="Wilson P."/>
            <person name="Seemann T."/>
            <person name="McGrath A."/>
            <person name="Cullen P.A."/>
            <person name="Davis J."/>
            <person name="Johnson M."/>
            <person name="Kuczek E."/>
            <person name="Alt D.P."/>
            <person name="Peterson-Burch B."/>
            <person name="Coppel R.L."/>
            <person name="Rood J.I."/>
            <person name="Davies J.K."/>
            <person name="Adler B."/>
        </authorList>
    </citation>
    <scope>NUCLEOTIDE SEQUENCE [LARGE SCALE GENOMIC DNA]</scope>
    <source>
        <strain>L550</strain>
    </source>
</reference>
<accession>Q04XX5</accession>
<proteinExistence type="inferred from homology"/>
<dbReference type="EC" id="2.1.2.11" evidence="1"/>
<dbReference type="EMBL" id="CP000348">
    <property type="protein sequence ID" value="ABJ80070.1"/>
    <property type="molecule type" value="Genomic_DNA"/>
</dbReference>
<dbReference type="RefSeq" id="WP_002754190.1">
    <property type="nucleotide sequence ID" value="NC_008508.1"/>
</dbReference>
<dbReference type="SMR" id="Q04XX5"/>
<dbReference type="KEGG" id="lbl:LBL_2729"/>
<dbReference type="HOGENOM" id="CLU_036645_1_0_12"/>
<dbReference type="UniPathway" id="UPA00028">
    <property type="reaction ID" value="UER00003"/>
</dbReference>
<dbReference type="GO" id="GO:0005737">
    <property type="term" value="C:cytoplasm"/>
    <property type="evidence" value="ECO:0007669"/>
    <property type="project" value="UniProtKB-SubCell"/>
</dbReference>
<dbReference type="GO" id="GO:0003864">
    <property type="term" value="F:3-methyl-2-oxobutanoate hydroxymethyltransferase activity"/>
    <property type="evidence" value="ECO:0007669"/>
    <property type="project" value="UniProtKB-UniRule"/>
</dbReference>
<dbReference type="GO" id="GO:0000287">
    <property type="term" value="F:magnesium ion binding"/>
    <property type="evidence" value="ECO:0007669"/>
    <property type="project" value="TreeGrafter"/>
</dbReference>
<dbReference type="GO" id="GO:0015940">
    <property type="term" value="P:pantothenate biosynthetic process"/>
    <property type="evidence" value="ECO:0007669"/>
    <property type="project" value="UniProtKB-UniRule"/>
</dbReference>
<dbReference type="CDD" id="cd06557">
    <property type="entry name" value="KPHMT-like"/>
    <property type="match status" value="1"/>
</dbReference>
<dbReference type="FunFam" id="3.20.20.60:FF:000003">
    <property type="entry name" value="3-methyl-2-oxobutanoate hydroxymethyltransferase"/>
    <property type="match status" value="1"/>
</dbReference>
<dbReference type="Gene3D" id="3.20.20.60">
    <property type="entry name" value="Phosphoenolpyruvate-binding domains"/>
    <property type="match status" value="1"/>
</dbReference>
<dbReference type="HAMAP" id="MF_00156">
    <property type="entry name" value="PanB"/>
    <property type="match status" value="1"/>
</dbReference>
<dbReference type="InterPro" id="IPR003700">
    <property type="entry name" value="Pantoate_hydroxy_MeTrfase"/>
</dbReference>
<dbReference type="InterPro" id="IPR015813">
    <property type="entry name" value="Pyrv/PenolPyrv_kinase-like_dom"/>
</dbReference>
<dbReference type="InterPro" id="IPR040442">
    <property type="entry name" value="Pyrv_kinase-like_dom_sf"/>
</dbReference>
<dbReference type="NCBIfam" id="TIGR00222">
    <property type="entry name" value="panB"/>
    <property type="match status" value="1"/>
</dbReference>
<dbReference type="NCBIfam" id="NF001452">
    <property type="entry name" value="PRK00311.1"/>
    <property type="match status" value="1"/>
</dbReference>
<dbReference type="PANTHER" id="PTHR20881">
    <property type="entry name" value="3-METHYL-2-OXOBUTANOATE HYDROXYMETHYLTRANSFERASE"/>
    <property type="match status" value="1"/>
</dbReference>
<dbReference type="PANTHER" id="PTHR20881:SF0">
    <property type="entry name" value="3-METHYL-2-OXOBUTANOATE HYDROXYMETHYLTRANSFERASE"/>
    <property type="match status" value="1"/>
</dbReference>
<dbReference type="Pfam" id="PF02548">
    <property type="entry name" value="Pantoate_transf"/>
    <property type="match status" value="1"/>
</dbReference>
<dbReference type="PIRSF" id="PIRSF000388">
    <property type="entry name" value="Pantoate_hydroxy_MeTrfase"/>
    <property type="match status" value="1"/>
</dbReference>
<dbReference type="SUPFAM" id="SSF51621">
    <property type="entry name" value="Phosphoenolpyruvate/pyruvate domain"/>
    <property type="match status" value="1"/>
</dbReference>
<gene>
    <name evidence="1" type="primary">panB</name>
    <name type="ordered locus">LBL_2729</name>
</gene>
<name>PANB_LEPBL</name>
<organism>
    <name type="scientific">Leptospira borgpetersenii serovar Hardjo-bovis (strain L550)</name>
    <dbReference type="NCBI Taxonomy" id="355276"/>
    <lineage>
        <taxon>Bacteria</taxon>
        <taxon>Pseudomonadati</taxon>
        <taxon>Spirochaetota</taxon>
        <taxon>Spirochaetia</taxon>
        <taxon>Leptospirales</taxon>
        <taxon>Leptospiraceae</taxon>
        <taxon>Leptospira</taxon>
    </lineage>
</organism>
<comment type="function">
    <text evidence="1">Catalyzes the reversible reaction in which hydroxymethyl group from 5,10-methylenetetrahydrofolate is transferred onto alpha-ketoisovalerate to form ketopantoate.</text>
</comment>
<comment type="catalytic activity">
    <reaction evidence="1">
        <text>3-methyl-2-oxobutanoate + (6R)-5,10-methylene-5,6,7,8-tetrahydrofolate + H2O = 2-dehydropantoate + (6S)-5,6,7,8-tetrahydrofolate</text>
        <dbReference type="Rhea" id="RHEA:11824"/>
        <dbReference type="ChEBI" id="CHEBI:11561"/>
        <dbReference type="ChEBI" id="CHEBI:11851"/>
        <dbReference type="ChEBI" id="CHEBI:15377"/>
        <dbReference type="ChEBI" id="CHEBI:15636"/>
        <dbReference type="ChEBI" id="CHEBI:57453"/>
        <dbReference type="EC" id="2.1.2.11"/>
    </reaction>
</comment>
<comment type="cofactor">
    <cofactor evidence="1">
        <name>Mg(2+)</name>
        <dbReference type="ChEBI" id="CHEBI:18420"/>
    </cofactor>
    <text evidence="1">Binds 1 Mg(2+) ion per subunit.</text>
</comment>
<comment type="pathway">
    <text evidence="1">Cofactor biosynthesis; (R)-pantothenate biosynthesis; (R)-pantoate from 3-methyl-2-oxobutanoate: step 1/2.</text>
</comment>
<comment type="subunit">
    <text evidence="1">Homodecamer; pentamer of dimers.</text>
</comment>
<comment type="subcellular location">
    <subcellularLocation>
        <location evidence="1">Cytoplasm</location>
    </subcellularLocation>
</comment>
<comment type="similarity">
    <text evidence="1">Belongs to the PanB family.</text>
</comment>
<keyword id="KW-0963">Cytoplasm</keyword>
<keyword id="KW-0460">Magnesium</keyword>
<keyword id="KW-0479">Metal-binding</keyword>
<keyword id="KW-0566">Pantothenate biosynthesis</keyword>
<keyword id="KW-0808">Transferase</keyword>
<evidence type="ECO:0000255" key="1">
    <source>
        <dbReference type="HAMAP-Rule" id="MF_00156"/>
    </source>
</evidence>
<protein>
    <recommendedName>
        <fullName evidence="1">3-methyl-2-oxobutanoate hydroxymethyltransferase</fullName>
        <ecNumber evidence="1">2.1.2.11</ecNumber>
    </recommendedName>
    <alternativeName>
        <fullName evidence="1">Ketopantoate hydroxymethyltransferase</fullName>
        <shortName evidence="1">KPHMT</shortName>
    </alternativeName>
</protein>
<feature type="chain" id="PRO_0000297288" description="3-methyl-2-oxobutanoate hydroxymethyltransferase">
    <location>
        <begin position="1"/>
        <end position="265"/>
    </location>
</feature>
<feature type="active site" description="Proton acceptor" evidence="1">
    <location>
        <position position="183"/>
    </location>
</feature>
<feature type="binding site" evidence="1">
    <location>
        <begin position="44"/>
        <end position="45"/>
    </location>
    <ligand>
        <name>3-methyl-2-oxobutanoate</name>
        <dbReference type="ChEBI" id="CHEBI:11851"/>
    </ligand>
</feature>
<feature type="binding site" evidence="1">
    <location>
        <position position="44"/>
    </location>
    <ligand>
        <name>Mg(2+)</name>
        <dbReference type="ChEBI" id="CHEBI:18420"/>
    </ligand>
</feature>
<feature type="binding site" evidence="1">
    <location>
        <position position="83"/>
    </location>
    <ligand>
        <name>3-methyl-2-oxobutanoate</name>
        <dbReference type="ChEBI" id="CHEBI:11851"/>
    </ligand>
</feature>
<feature type="binding site" evidence="1">
    <location>
        <position position="83"/>
    </location>
    <ligand>
        <name>Mg(2+)</name>
        <dbReference type="ChEBI" id="CHEBI:18420"/>
    </ligand>
</feature>
<feature type="binding site" evidence="1">
    <location>
        <position position="113"/>
    </location>
    <ligand>
        <name>3-methyl-2-oxobutanoate</name>
        <dbReference type="ChEBI" id="CHEBI:11851"/>
    </ligand>
</feature>
<feature type="binding site" evidence="1">
    <location>
        <position position="115"/>
    </location>
    <ligand>
        <name>Mg(2+)</name>
        <dbReference type="ChEBI" id="CHEBI:18420"/>
    </ligand>
</feature>
<sequence length="265" mass="28806">MKNIHKIFSPEKKGKEKISVVTCYDFSFARILGETPIDSILVGDSLGMVFQGNSSTLPVTLEEMIYHTKVVRRGAPDKFIIADLPFLSYQTSIEEGIRSAGRMMKETDCDAVKIEGGSDFICELVAILKQIGIPVMGHLGLTPQSVHVFGGHRVQGKGEESSAKLLREAVALSESGAFSIVLEMIPAELGKRVSEEVGVPTIGIGAGPDCDGQVLVLNDLLGLDANFQPKFLKKFSNLHSIVKDAIESYHEEVRSGEFPGKDHSF</sequence>